<evidence type="ECO:0000255" key="1">
    <source>
        <dbReference type="HAMAP-Rule" id="MF_01458"/>
    </source>
</evidence>
<evidence type="ECO:0000256" key="2">
    <source>
        <dbReference type="SAM" id="MobiDB-lite"/>
    </source>
</evidence>
<feature type="chain" id="PRO_0000400373" description="ATP-dependent zinc metalloprotease FtsH">
    <location>
        <begin position="1"/>
        <end position="696"/>
    </location>
</feature>
<feature type="topological domain" description="Cytoplasmic" evidence="1">
    <location>
        <begin position="1"/>
        <end position="29"/>
    </location>
</feature>
<feature type="transmembrane region" description="Helical" evidence="1">
    <location>
        <begin position="30"/>
        <end position="50"/>
    </location>
</feature>
<feature type="topological domain" description="Periplasmic" evidence="1">
    <location>
        <begin position="51"/>
        <end position="124"/>
    </location>
</feature>
<feature type="transmembrane region" description="Helical" evidence="1">
    <location>
        <begin position="125"/>
        <end position="145"/>
    </location>
</feature>
<feature type="topological domain" description="Cytoplasmic" evidence="1">
    <location>
        <begin position="146"/>
        <end position="696"/>
    </location>
</feature>
<feature type="region of interest" description="Disordered" evidence="2">
    <location>
        <begin position="627"/>
        <end position="696"/>
    </location>
</feature>
<feature type="compositionally biased region" description="Basic and acidic residues" evidence="2">
    <location>
        <begin position="650"/>
        <end position="696"/>
    </location>
</feature>
<feature type="active site" evidence="1">
    <location>
        <position position="442"/>
    </location>
</feature>
<feature type="binding site" evidence="1">
    <location>
        <begin position="219"/>
        <end position="226"/>
    </location>
    <ligand>
        <name>ATP</name>
        <dbReference type="ChEBI" id="CHEBI:30616"/>
    </ligand>
</feature>
<feature type="binding site" evidence="1">
    <location>
        <position position="441"/>
    </location>
    <ligand>
        <name>Zn(2+)</name>
        <dbReference type="ChEBI" id="CHEBI:29105"/>
        <note>catalytic</note>
    </ligand>
</feature>
<feature type="binding site" evidence="1">
    <location>
        <position position="445"/>
    </location>
    <ligand>
        <name>Zn(2+)</name>
        <dbReference type="ChEBI" id="CHEBI:29105"/>
        <note>catalytic</note>
    </ligand>
</feature>
<feature type="binding site" evidence="1">
    <location>
        <position position="519"/>
    </location>
    <ligand>
        <name>Zn(2+)</name>
        <dbReference type="ChEBI" id="CHEBI:29105"/>
        <note>catalytic</note>
    </ligand>
</feature>
<gene>
    <name evidence="1" type="primary">ftsH</name>
    <name type="ordered locus">PBPRA0604</name>
</gene>
<reference key="1">
    <citation type="journal article" date="2005" name="Science">
        <title>Life at depth: Photobacterium profundum genome sequence and expression analysis.</title>
        <authorList>
            <person name="Vezzi A."/>
            <person name="Campanaro S."/>
            <person name="D'Angelo M."/>
            <person name="Simonato F."/>
            <person name="Vitulo N."/>
            <person name="Lauro F.M."/>
            <person name="Cestaro A."/>
            <person name="Malacrida G."/>
            <person name="Simionati B."/>
            <person name="Cannata N."/>
            <person name="Romualdi C."/>
            <person name="Bartlett D.H."/>
            <person name="Valle G."/>
        </authorList>
    </citation>
    <scope>NUCLEOTIDE SEQUENCE [LARGE SCALE GENOMIC DNA]</scope>
    <source>
        <strain>ATCC BAA-1253 / SS9</strain>
    </source>
</reference>
<dbReference type="EC" id="3.4.24.-" evidence="1"/>
<dbReference type="EMBL" id="CR378664">
    <property type="protein sequence ID" value="CAG19027.1"/>
    <property type="molecule type" value="Genomic_DNA"/>
</dbReference>
<dbReference type="SMR" id="Q6LUJ8"/>
<dbReference type="STRING" id="298386.PBPRA0604"/>
<dbReference type="MEROPS" id="M41.001"/>
<dbReference type="KEGG" id="ppr:PBPRA0604"/>
<dbReference type="eggNOG" id="COG0465">
    <property type="taxonomic scope" value="Bacteria"/>
</dbReference>
<dbReference type="HOGENOM" id="CLU_000688_16_0_6"/>
<dbReference type="Proteomes" id="UP000000593">
    <property type="component" value="Chromosome 1"/>
</dbReference>
<dbReference type="GO" id="GO:0005886">
    <property type="term" value="C:plasma membrane"/>
    <property type="evidence" value="ECO:0007669"/>
    <property type="project" value="UniProtKB-SubCell"/>
</dbReference>
<dbReference type="GO" id="GO:0005524">
    <property type="term" value="F:ATP binding"/>
    <property type="evidence" value="ECO:0007669"/>
    <property type="project" value="UniProtKB-UniRule"/>
</dbReference>
<dbReference type="GO" id="GO:0016887">
    <property type="term" value="F:ATP hydrolysis activity"/>
    <property type="evidence" value="ECO:0007669"/>
    <property type="project" value="UniProtKB-UniRule"/>
</dbReference>
<dbReference type="GO" id="GO:0004176">
    <property type="term" value="F:ATP-dependent peptidase activity"/>
    <property type="evidence" value="ECO:0007669"/>
    <property type="project" value="InterPro"/>
</dbReference>
<dbReference type="GO" id="GO:0004222">
    <property type="term" value="F:metalloendopeptidase activity"/>
    <property type="evidence" value="ECO:0007669"/>
    <property type="project" value="InterPro"/>
</dbReference>
<dbReference type="GO" id="GO:0008270">
    <property type="term" value="F:zinc ion binding"/>
    <property type="evidence" value="ECO:0007669"/>
    <property type="project" value="UniProtKB-UniRule"/>
</dbReference>
<dbReference type="GO" id="GO:0030163">
    <property type="term" value="P:protein catabolic process"/>
    <property type="evidence" value="ECO:0007669"/>
    <property type="project" value="UniProtKB-UniRule"/>
</dbReference>
<dbReference type="GO" id="GO:0006508">
    <property type="term" value="P:proteolysis"/>
    <property type="evidence" value="ECO:0007669"/>
    <property type="project" value="UniProtKB-KW"/>
</dbReference>
<dbReference type="CDD" id="cd19501">
    <property type="entry name" value="RecA-like_FtsH"/>
    <property type="match status" value="1"/>
</dbReference>
<dbReference type="FunFam" id="1.10.8.60:FF:000001">
    <property type="entry name" value="ATP-dependent zinc metalloprotease FtsH"/>
    <property type="match status" value="1"/>
</dbReference>
<dbReference type="FunFam" id="1.20.58.760:FF:000001">
    <property type="entry name" value="ATP-dependent zinc metalloprotease FtsH"/>
    <property type="match status" value="1"/>
</dbReference>
<dbReference type="FunFam" id="3.30.720.210:FF:000001">
    <property type="entry name" value="ATP-dependent zinc metalloprotease FtsH"/>
    <property type="match status" value="1"/>
</dbReference>
<dbReference type="FunFam" id="3.40.50.300:FF:000001">
    <property type="entry name" value="ATP-dependent zinc metalloprotease FtsH"/>
    <property type="match status" value="1"/>
</dbReference>
<dbReference type="Gene3D" id="1.10.8.60">
    <property type="match status" value="1"/>
</dbReference>
<dbReference type="Gene3D" id="3.30.720.210">
    <property type="match status" value="1"/>
</dbReference>
<dbReference type="Gene3D" id="3.40.50.300">
    <property type="entry name" value="P-loop containing nucleotide triphosphate hydrolases"/>
    <property type="match status" value="1"/>
</dbReference>
<dbReference type="Gene3D" id="1.20.58.760">
    <property type="entry name" value="Peptidase M41"/>
    <property type="match status" value="1"/>
</dbReference>
<dbReference type="HAMAP" id="MF_01458">
    <property type="entry name" value="FtsH"/>
    <property type="match status" value="1"/>
</dbReference>
<dbReference type="InterPro" id="IPR003593">
    <property type="entry name" value="AAA+_ATPase"/>
</dbReference>
<dbReference type="InterPro" id="IPR041569">
    <property type="entry name" value="AAA_lid_3"/>
</dbReference>
<dbReference type="InterPro" id="IPR003959">
    <property type="entry name" value="ATPase_AAA_core"/>
</dbReference>
<dbReference type="InterPro" id="IPR003960">
    <property type="entry name" value="ATPase_AAA_CS"/>
</dbReference>
<dbReference type="InterPro" id="IPR005936">
    <property type="entry name" value="FtsH"/>
</dbReference>
<dbReference type="InterPro" id="IPR027417">
    <property type="entry name" value="P-loop_NTPase"/>
</dbReference>
<dbReference type="InterPro" id="IPR011546">
    <property type="entry name" value="Pept_M41_FtsH_extracell"/>
</dbReference>
<dbReference type="InterPro" id="IPR000642">
    <property type="entry name" value="Peptidase_M41"/>
</dbReference>
<dbReference type="InterPro" id="IPR037219">
    <property type="entry name" value="Peptidase_M41-like"/>
</dbReference>
<dbReference type="NCBIfam" id="TIGR01241">
    <property type="entry name" value="FtsH_fam"/>
    <property type="match status" value="1"/>
</dbReference>
<dbReference type="NCBIfam" id="NF008004">
    <property type="entry name" value="PRK10733.1"/>
    <property type="match status" value="1"/>
</dbReference>
<dbReference type="PANTHER" id="PTHR23076:SF97">
    <property type="entry name" value="ATP-DEPENDENT ZINC METALLOPROTEASE YME1L1"/>
    <property type="match status" value="1"/>
</dbReference>
<dbReference type="PANTHER" id="PTHR23076">
    <property type="entry name" value="METALLOPROTEASE M41 FTSH"/>
    <property type="match status" value="1"/>
</dbReference>
<dbReference type="Pfam" id="PF00004">
    <property type="entry name" value="AAA"/>
    <property type="match status" value="1"/>
</dbReference>
<dbReference type="Pfam" id="PF17862">
    <property type="entry name" value="AAA_lid_3"/>
    <property type="match status" value="1"/>
</dbReference>
<dbReference type="Pfam" id="PF06480">
    <property type="entry name" value="FtsH_ext"/>
    <property type="match status" value="1"/>
</dbReference>
<dbReference type="Pfam" id="PF01434">
    <property type="entry name" value="Peptidase_M41"/>
    <property type="match status" value="1"/>
</dbReference>
<dbReference type="SMART" id="SM00382">
    <property type="entry name" value="AAA"/>
    <property type="match status" value="1"/>
</dbReference>
<dbReference type="SUPFAM" id="SSF140990">
    <property type="entry name" value="FtsH protease domain-like"/>
    <property type="match status" value="1"/>
</dbReference>
<dbReference type="SUPFAM" id="SSF52540">
    <property type="entry name" value="P-loop containing nucleoside triphosphate hydrolases"/>
    <property type="match status" value="1"/>
</dbReference>
<dbReference type="PROSITE" id="PS00674">
    <property type="entry name" value="AAA"/>
    <property type="match status" value="1"/>
</dbReference>
<proteinExistence type="inferred from homology"/>
<protein>
    <recommendedName>
        <fullName evidence="1">ATP-dependent zinc metalloprotease FtsH</fullName>
        <ecNumber evidence="1">3.4.24.-</ecNumber>
    </recommendedName>
</protein>
<keyword id="KW-0067">ATP-binding</keyword>
<keyword id="KW-0997">Cell inner membrane</keyword>
<keyword id="KW-1003">Cell membrane</keyword>
<keyword id="KW-0378">Hydrolase</keyword>
<keyword id="KW-0472">Membrane</keyword>
<keyword id="KW-0479">Metal-binding</keyword>
<keyword id="KW-0482">Metalloprotease</keyword>
<keyword id="KW-0547">Nucleotide-binding</keyword>
<keyword id="KW-0645">Protease</keyword>
<keyword id="KW-1185">Reference proteome</keyword>
<keyword id="KW-0812">Transmembrane</keyword>
<keyword id="KW-1133">Transmembrane helix</keyword>
<keyword id="KW-0862">Zinc</keyword>
<organism>
    <name type="scientific">Photobacterium profundum (strain SS9)</name>
    <dbReference type="NCBI Taxonomy" id="298386"/>
    <lineage>
        <taxon>Bacteria</taxon>
        <taxon>Pseudomonadati</taxon>
        <taxon>Pseudomonadota</taxon>
        <taxon>Gammaproteobacteria</taxon>
        <taxon>Vibrionales</taxon>
        <taxon>Vibrionaceae</taxon>
        <taxon>Photobacterium</taxon>
    </lineage>
</organism>
<sequence length="696" mass="76711">MWLQVTNCSTLHSSLSYCGANTLSDMAKNLILWLVIAVVLMSVFQSFGPSDSAGRQVDYTTFVREIGQDQIREARFNEREITVFKRDNTRYVTYLPVFNDQKLLDDLINANVKVLGTPPEEPSLLASIFISWFPMLLLIGVWVFFMRQMQGGGGGKGAMSFGKSKARMMSEDQIKTTFADVAGCDEAKEDVKELVDYLRDPSRFQKLGGKIPTGILLVGPPGTGKTLLAKAIAGEAKVPFFTISGSDFVEMFVGVGASRVRDMFEQAKKAAPCIIFIDEIDAVGRQRGAGVGGGHDEREQTLNQMLVEMDGFEGNEGVIVIAATNRPDVLDPALLRPGRFDRQVVVGLPDVRGREQILKVHMRKVPLEGDVEPSLIARGTPGFSGADLANLVNEAALFAARGNKRVVSMQEFELAKDKIMMGAERKSMVMSEDQKESTAYHEAGHAIIGRLVPDHDPVYKVSIIPRGRALGVTMYLPEKDRISHSREFLESMLSSLYGGRLAEELIYGVDKVSTGASNDIERATDIARKMVTQWGFSEKMGPVLYADDEGEVFLGRSVTQTKHMSDDTARAIDMEIRALIDRNYERAREILAQNMDIMHAMKDALMKYETIDAAQIDDLMARKSEIRAPKGWGDTDDVMKSSPTTSESAPEAKTESAPEAKAEANVETEEKPVAADSEELKPKAEQAPKEDDKPQA</sequence>
<accession>Q6LUJ8</accession>
<name>FTSH_PHOPR</name>
<comment type="function">
    <text evidence="1">Acts as a processive, ATP-dependent zinc metallopeptidase for both cytoplasmic and membrane proteins. Plays a role in the quality control of integral membrane proteins.</text>
</comment>
<comment type="cofactor">
    <cofactor evidence="1">
        <name>Zn(2+)</name>
        <dbReference type="ChEBI" id="CHEBI:29105"/>
    </cofactor>
    <text evidence="1">Binds 1 zinc ion per subunit.</text>
</comment>
<comment type="subunit">
    <text evidence="1">Homohexamer.</text>
</comment>
<comment type="subcellular location">
    <subcellularLocation>
        <location evidence="1">Cell inner membrane</location>
        <topology evidence="1">Multi-pass membrane protein</topology>
        <orientation evidence="1">Cytoplasmic side</orientation>
    </subcellularLocation>
</comment>
<comment type="similarity">
    <text evidence="1">In the central section; belongs to the AAA ATPase family.</text>
</comment>
<comment type="similarity">
    <text evidence="1">In the C-terminal section; belongs to the peptidase M41 family.</text>
</comment>